<comment type="function">
    <text evidence="1">Plays a central role in chromosome condensation, segregation and cell cycle progression. Functions as a homodimer, which is essential for chromosome partition. Involved in negative DNA supercoiling in vivo, and by this means organize and compact chromosomes. May achieve or facilitate chromosome segregation by condensation DNA from both sides of a centrally located replisome during cell division.</text>
</comment>
<comment type="subunit">
    <text evidence="1">Homodimerization via its hinge domain. Binds to DNA via its C-terminal region. Interacts, and probably forms a ternary complex, with MukE and MukF via its C-terminal region. The complex formation is stimulated by calcium or magnesium. Interacts with tubulin-related protein FtsZ.</text>
</comment>
<comment type="subcellular location">
    <subcellularLocation>
        <location evidence="1">Cytoplasm</location>
        <location evidence="1">Nucleoid</location>
    </subcellularLocation>
    <text evidence="1">Restricted to the nucleoid region.</text>
</comment>
<comment type="domain">
    <text evidence="1">The hinge domain, which separates the large intramolecular coiled coil regions, allows the homodimerization, forming a V-shaped homodimer.</text>
</comment>
<comment type="similarity">
    <text evidence="1">Belongs to the SMC family. MukB subfamily.</text>
</comment>
<accession>Q8FJA2</accession>
<reference key="1">
    <citation type="journal article" date="2002" name="Proc. Natl. Acad. Sci. U.S.A.">
        <title>Extensive mosaic structure revealed by the complete genome sequence of uropathogenic Escherichia coli.</title>
        <authorList>
            <person name="Welch R.A."/>
            <person name="Burland V."/>
            <person name="Plunkett G. III"/>
            <person name="Redford P."/>
            <person name="Roesch P."/>
            <person name="Rasko D."/>
            <person name="Buckles E.L."/>
            <person name="Liou S.-R."/>
            <person name="Boutin A."/>
            <person name="Hackett J."/>
            <person name="Stroud D."/>
            <person name="Mayhew G.F."/>
            <person name="Rose D.J."/>
            <person name="Zhou S."/>
            <person name="Schwartz D.C."/>
            <person name="Perna N.T."/>
            <person name="Mobley H.L.T."/>
            <person name="Donnenberg M.S."/>
            <person name="Blattner F.R."/>
        </authorList>
    </citation>
    <scope>NUCLEOTIDE SEQUENCE [LARGE SCALE GENOMIC DNA]</scope>
    <source>
        <strain>CFT073 / ATCC 700928 / UPEC</strain>
    </source>
</reference>
<organism>
    <name type="scientific">Escherichia coli O6:H1 (strain CFT073 / ATCC 700928 / UPEC)</name>
    <dbReference type="NCBI Taxonomy" id="199310"/>
    <lineage>
        <taxon>Bacteria</taxon>
        <taxon>Pseudomonadati</taxon>
        <taxon>Pseudomonadota</taxon>
        <taxon>Gammaproteobacteria</taxon>
        <taxon>Enterobacterales</taxon>
        <taxon>Enterobacteriaceae</taxon>
        <taxon>Escherichia</taxon>
    </lineage>
</organism>
<dbReference type="EMBL" id="AE014075">
    <property type="protein sequence ID" value="AAN79534.1"/>
    <property type="molecule type" value="Genomic_DNA"/>
</dbReference>
<dbReference type="RefSeq" id="WP_000572717.1">
    <property type="nucleotide sequence ID" value="NZ_CP051263.1"/>
</dbReference>
<dbReference type="SMR" id="Q8FJA2"/>
<dbReference type="STRING" id="199310.c1066"/>
<dbReference type="KEGG" id="ecc:c1066"/>
<dbReference type="eggNOG" id="COG3096">
    <property type="taxonomic scope" value="Bacteria"/>
</dbReference>
<dbReference type="HOGENOM" id="CLU_004430_0_0_6"/>
<dbReference type="BioCyc" id="ECOL199310:C1066-MONOMER"/>
<dbReference type="Proteomes" id="UP000001410">
    <property type="component" value="Chromosome"/>
</dbReference>
<dbReference type="GO" id="GO:0005737">
    <property type="term" value="C:cytoplasm"/>
    <property type="evidence" value="ECO:0007669"/>
    <property type="project" value="UniProtKB-UniRule"/>
</dbReference>
<dbReference type="GO" id="GO:0009295">
    <property type="term" value="C:nucleoid"/>
    <property type="evidence" value="ECO:0007669"/>
    <property type="project" value="UniProtKB-SubCell"/>
</dbReference>
<dbReference type="GO" id="GO:0005524">
    <property type="term" value="F:ATP binding"/>
    <property type="evidence" value="ECO:0007669"/>
    <property type="project" value="UniProtKB-UniRule"/>
</dbReference>
<dbReference type="GO" id="GO:0003677">
    <property type="term" value="F:DNA binding"/>
    <property type="evidence" value="ECO:0007669"/>
    <property type="project" value="UniProtKB-UniRule"/>
</dbReference>
<dbReference type="GO" id="GO:0051301">
    <property type="term" value="P:cell division"/>
    <property type="evidence" value="ECO:0007669"/>
    <property type="project" value="UniProtKB-KW"/>
</dbReference>
<dbReference type="GO" id="GO:0030261">
    <property type="term" value="P:chromosome condensation"/>
    <property type="evidence" value="ECO:0007669"/>
    <property type="project" value="UniProtKB-KW"/>
</dbReference>
<dbReference type="GO" id="GO:0007059">
    <property type="term" value="P:chromosome segregation"/>
    <property type="evidence" value="ECO:0007669"/>
    <property type="project" value="UniProtKB-UniRule"/>
</dbReference>
<dbReference type="GO" id="GO:0006260">
    <property type="term" value="P:DNA replication"/>
    <property type="evidence" value="ECO:0007669"/>
    <property type="project" value="UniProtKB-UniRule"/>
</dbReference>
<dbReference type="FunFam" id="1.20.58.850:FF:000001">
    <property type="entry name" value="Chromosome partition protein MukB"/>
    <property type="match status" value="1"/>
</dbReference>
<dbReference type="FunFam" id="3.30.70.3500:FF:000001">
    <property type="entry name" value="Chromosome partition protein MukB"/>
    <property type="match status" value="1"/>
</dbReference>
<dbReference type="FunFam" id="3.40.1140.10:FF:000001">
    <property type="entry name" value="Chromosome partition protein MukB"/>
    <property type="match status" value="1"/>
</dbReference>
<dbReference type="FunFam" id="3.40.1140.10:FF:000002">
    <property type="entry name" value="Chromosome partition protein MukB"/>
    <property type="match status" value="1"/>
</dbReference>
<dbReference type="Gene3D" id="1.10.287.1490">
    <property type="match status" value="1"/>
</dbReference>
<dbReference type="Gene3D" id="1.20.58.850">
    <property type="match status" value="1"/>
</dbReference>
<dbReference type="Gene3D" id="3.40.1140.10">
    <property type="match status" value="2"/>
</dbReference>
<dbReference type="Gene3D" id="1.20.5.420">
    <property type="entry name" value="Immunoglobulin FC, subunit C"/>
    <property type="match status" value="1"/>
</dbReference>
<dbReference type="Gene3D" id="3.30.70.3500">
    <property type="entry name" value="MukB, hinge domain"/>
    <property type="match status" value="1"/>
</dbReference>
<dbReference type="HAMAP" id="MF_01800">
    <property type="entry name" value="MukB"/>
    <property type="match status" value="1"/>
</dbReference>
<dbReference type="InterPro" id="IPR012090">
    <property type="entry name" value="MukB"/>
</dbReference>
<dbReference type="InterPro" id="IPR050308">
    <property type="entry name" value="MukB/SMC"/>
</dbReference>
<dbReference type="InterPro" id="IPR032520">
    <property type="entry name" value="MukB_hinge"/>
</dbReference>
<dbReference type="InterPro" id="IPR042501">
    <property type="entry name" value="MukB_hinge_sf"/>
</dbReference>
<dbReference type="InterPro" id="IPR007406">
    <property type="entry name" value="MukB_N_dom"/>
</dbReference>
<dbReference type="InterPro" id="IPR027417">
    <property type="entry name" value="P-loop_NTPase"/>
</dbReference>
<dbReference type="NCBIfam" id="NF003422">
    <property type="entry name" value="PRK04863.1"/>
    <property type="match status" value="1"/>
</dbReference>
<dbReference type="PANTHER" id="PTHR42963">
    <property type="entry name" value="CHROMOSOME PARTITION PROTEIN MUKB"/>
    <property type="match status" value="1"/>
</dbReference>
<dbReference type="PANTHER" id="PTHR42963:SF1">
    <property type="entry name" value="DUF4476 DOMAIN-CONTAINING PROTEIN"/>
    <property type="match status" value="1"/>
</dbReference>
<dbReference type="Pfam" id="PF04310">
    <property type="entry name" value="MukB"/>
    <property type="match status" value="1"/>
</dbReference>
<dbReference type="Pfam" id="PF16330">
    <property type="entry name" value="MukB_hinge"/>
    <property type="match status" value="1"/>
</dbReference>
<dbReference type="Pfam" id="PF13558">
    <property type="entry name" value="SbcC_Walker_B"/>
    <property type="match status" value="1"/>
</dbReference>
<dbReference type="PIRSF" id="PIRSF005246">
    <property type="entry name" value="MukB"/>
    <property type="match status" value="1"/>
</dbReference>
<dbReference type="SUPFAM" id="SSF52540">
    <property type="entry name" value="P-loop containing nucleoside triphosphate hydrolases"/>
    <property type="match status" value="2"/>
</dbReference>
<feature type="chain" id="PRO_0000068216" description="Chromosome partition protein MukB">
    <location>
        <begin position="1"/>
        <end position="1486"/>
    </location>
</feature>
<feature type="region of interest" description="Flexible hinge" evidence="1">
    <location>
        <begin position="666"/>
        <end position="783"/>
    </location>
</feature>
<feature type="coiled-coil region" evidence="1">
    <location>
        <begin position="326"/>
        <end position="418"/>
    </location>
</feature>
<feature type="coiled-coil region" evidence="1">
    <location>
        <begin position="444"/>
        <end position="480"/>
    </location>
</feature>
<feature type="coiled-coil region" evidence="1">
    <location>
        <begin position="509"/>
        <end position="603"/>
    </location>
</feature>
<feature type="coiled-coil region" evidence="1">
    <location>
        <begin position="835"/>
        <end position="923"/>
    </location>
</feature>
<feature type="coiled-coil region" evidence="1">
    <location>
        <begin position="977"/>
        <end position="1115"/>
    </location>
</feature>
<feature type="coiled-coil region" evidence="1">
    <location>
        <begin position="1209"/>
        <end position="1266"/>
    </location>
</feature>
<feature type="binding site" evidence="1">
    <location>
        <begin position="34"/>
        <end position="41"/>
    </location>
    <ligand>
        <name>ATP</name>
        <dbReference type="ChEBI" id="CHEBI:30616"/>
    </ligand>
</feature>
<proteinExistence type="inferred from homology"/>
<keyword id="KW-0067">ATP-binding</keyword>
<keyword id="KW-0131">Cell cycle</keyword>
<keyword id="KW-0132">Cell division</keyword>
<keyword id="KW-0159">Chromosome partition</keyword>
<keyword id="KW-0175">Coiled coil</keyword>
<keyword id="KW-0963">Cytoplasm</keyword>
<keyword id="KW-0226">DNA condensation</keyword>
<keyword id="KW-0238">DNA-binding</keyword>
<keyword id="KW-0547">Nucleotide-binding</keyword>
<keyword id="KW-1185">Reference proteome</keyword>
<sequence length="1486" mass="170226">MIERGKFRSLTLINWNGFFARTFDLDELVTTLSGGNGAGKSTTMAAFVTALIPDLTLLHFRNTTEAGATSGSRDKGLHGKLKAGVCYSMLDTINSRHQRVVVGVRLQQVAGRDRKVDIKPFAIQGLPMSVQPTQLVTETLNERQARVLPLNELKDKLEAMEGVQFKQFNSITDYHSLMFELGIIARRLRSASDRSKFYRLIEASLYGGISSAITRSLRDYLLPENSGVRKAFQDMEAALRENRMTLEAIRVTQSDRDLFKHLISEATNYVAADYMRHANERRVHLDKALEFRRELHTSRQQLAAEQYKHVDMARELAEHNGAEGDLEADYQAASDHLNLVQTALRQQEKIERYEADLDELQIRLEEQNEVVAEAIERQEENEARAEAAELEVDELKSQLADYQQALDVQQTRAIQYNQAIAALNRAKELCHLPDLTADSAAEWLETFQAKELEATEKMLSLEQKMSMAQTAHSQFEQAYQLVVAINGPLARNEAWDVARELLREGVDQRHLAEQVQPLRMRLSELEQRLREQQEAERLLADFCKRQGKNFDIDELEALHQELEARIASLSDSVSNAREERMALRQEQEQLQSRIQSLMQRAPVWLAAQNSLNQLSEQCGEEFTSSQDVTEFLQQLLEREREAIVERDEVGARKNAVDEEIERLSQPGGSEDQRLNALAERFGGVLLSEIYDDVSLEDAPYFSALYGPSRHAIVVPDLSQVTEHLEGLTDCPEDLYLIEGDPQSFDDSVFSVDELEKAVVVKIADRQWRYSRFPEVPLFGRAARESRIESLHAEREVLSERFATLSFDVQKTQRLHQAFSRFIGSHLAVAFESDPEAEIRQLNSRRVELERALSNHENDNQQQRIQFEQAKEGVTALNRILPRLNLLADDSLADRVDEIRERLDEAQEAARFVQQFGNQLAKLEPIVSVLQSDPEQFEQLKEDYAYSQQMQRDARQQAFALTEVVQRRAHFSYSDSAEMLSGNSDLNEKLRERLEQAEAERTRAREALRGHAAQLNQYNQVLASLKSSYDTKKELLNDLQRELQDIGVRADSGAEERARIRRDELHAQLSNNRSRRNQLEKALTFCEAEMDNLTRKLRKLERDYFEMREQVVTAKAGWCAVMRMVKDNGVERRLHRRELAYLSADDLRSMSDKALGALRLAVADNEHLRDVLRMSEDPKRPERKIQFFVAVYQHLRERIRQDIIRTDDPVEAIEQMEIELSRLTEELTSREQKLAISSRSVANIIRKTIQREQNRIRMLNQGLQNVSFGQVNSVRLNVNVRETHAMLLDVLSEQHEQHQDLFNSNRLTFSEALAKLYQRLNPQIDMGQRTPQTIGEELLDYRNYLEMEVEVNRGSDGWLRAESGALSTGEAIGTGMSILVMVVQSWEDESRRLRGKDISPCRLLFLDEAARLDARSIATLFELCERLQMQLIIAAPENISPEKGTTYKLVRKVFQNTEHVHVVGLRGFAPQLPETLPGSDEAPSQAS</sequence>
<evidence type="ECO:0000255" key="1">
    <source>
        <dbReference type="HAMAP-Rule" id="MF_01800"/>
    </source>
</evidence>
<name>MUKB_ECOL6</name>
<protein>
    <recommendedName>
        <fullName evidence="1">Chromosome partition protein MukB</fullName>
    </recommendedName>
    <alternativeName>
        <fullName evidence="1">Structural maintenance of chromosome-related protein</fullName>
    </alternativeName>
</protein>
<gene>
    <name evidence="1" type="primary">mukB</name>
    <name type="ordered locus">c1066</name>
</gene>